<reference key="1">
    <citation type="journal article" date="2005" name="Nature">
        <title>The genome of the social amoeba Dictyostelium discoideum.</title>
        <authorList>
            <person name="Eichinger L."/>
            <person name="Pachebat J.A."/>
            <person name="Gloeckner G."/>
            <person name="Rajandream M.A."/>
            <person name="Sucgang R."/>
            <person name="Berriman M."/>
            <person name="Song J."/>
            <person name="Olsen R."/>
            <person name="Szafranski K."/>
            <person name="Xu Q."/>
            <person name="Tunggal B."/>
            <person name="Kummerfeld S."/>
            <person name="Madera M."/>
            <person name="Konfortov B.A."/>
            <person name="Rivero F."/>
            <person name="Bankier A.T."/>
            <person name="Lehmann R."/>
            <person name="Hamlin N."/>
            <person name="Davies R."/>
            <person name="Gaudet P."/>
            <person name="Fey P."/>
            <person name="Pilcher K."/>
            <person name="Chen G."/>
            <person name="Saunders D."/>
            <person name="Sodergren E.J."/>
            <person name="Davis P."/>
            <person name="Kerhornou A."/>
            <person name="Nie X."/>
            <person name="Hall N."/>
            <person name="Anjard C."/>
            <person name="Hemphill L."/>
            <person name="Bason N."/>
            <person name="Farbrother P."/>
            <person name="Desany B."/>
            <person name="Just E."/>
            <person name="Morio T."/>
            <person name="Rost R."/>
            <person name="Churcher C.M."/>
            <person name="Cooper J."/>
            <person name="Haydock S."/>
            <person name="van Driessche N."/>
            <person name="Cronin A."/>
            <person name="Goodhead I."/>
            <person name="Muzny D.M."/>
            <person name="Mourier T."/>
            <person name="Pain A."/>
            <person name="Lu M."/>
            <person name="Harper D."/>
            <person name="Lindsay R."/>
            <person name="Hauser H."/>
            <person name="James K.D."/>
            <person name="Quiles M."/>
            <person name="Madan Babu M."/>
            <person name="Saito T."/>
            <person name="Buchrieser C."/>
            <person name="Wardroper A."/>
            <person name="Felder M."/>
            <person name="Thangavelu M."/>
            <person name="Johnson D."/>
            <person name="Knights A."/>
            <person name="Loulseged H."/>
            <person name="Mungall K.L."/>
            <person name="Oliver K."/>
            <person name="Price C."/>
            <person name="Quail M.A."/>
            <person name="Urushihara H."/>
            <person name="Hernandez J."/>
            <person name="Rabbinowitsch E."/>
            <person name="Steffen D."/>
            <person name="Sanders M."/>
            <person name="Ma J."/>
            <person name="Kohara Y."/>
            <person name="Sharp S."/>
            <person name="Simmonds M.N."/>
            <person name="Spiegler S."/>
            <person name="Tivey A."/>
            <person name="Sugano S."/>
            <person name="White B."/>
            <person name="Walker D."/>
            <person name="Woodward J.R."/>
            <person name="Winckler T."/>
            <person name="Tanaka Y."/>
            <person name="Shaulsky G."/>
            <person name="Schleicher M."/>
            <person name="Weinstock G.M."/>
            <person name="Rosenthal A."/>
            <person name="Cox E.C."/>
            <person name="Chisholm R.L."/>
            <person name="Gibbs R.A."/>
            <person name="Loomis W.F."/>
            <person name="Platzer M."/>
            <person name="Kay R.R."/>
            <person name="Williams J.G."/>
            <person name="Dear P.H."/>
            <person name="Noegel A.A."/>
            <person name="Barrell B.G."/>
            <person name="Kuspa A."/>
        </authorList>
    </citation>
    <scope>NUCLEOTIDE SEQUENCE [LARGE SCALE GENOMIC DNA]</scope>
    <source>
        <strain>AX4</strain>
    </source>
</reference>
<organism>
    <name type="scientific">Dictyostelium discoideum</name>
    <name type="common">Social amoeba</name>
    <dbReference type="NCBI Taxonomy" id="44689"/>
    <lineage>
        <taxon>Eukaryota</taxon>
        <taxon>Amoebozoa</taxon>
        <taxon>Evosea</taxon>
        <taxon>Eumycetozoa</taxon>
        <taxon>Dictyostelia</taxon>
        <taxon>Dictyosteliales</taxon>
        <taxon>Dictyosteliaceae</taxon>
        <taxon>Dictyostelium</taxon>
    </lineage>
</organism>
<evidence type="ECO:0000250" key="1"/>
<evidence type="ECO:0000305" key="2"/>
<feature type="chain" id="PRO_0000331205" description="Mitochondrial import inner membrane translocase subunit tim16">
    <location>
        <begin position="1"/>
        <end position="113"/>
    </location>
</feature>
<feature type="region of interest" description="J-like">
    <location>
        <begin position="56"/>
        <end position="108"/>
    </location>
</feature>
<sequence length="113" mass="12221">MAARLIAKIVFTSGTVLVRSIQMAYKQALLQAESGMGAAAGSMDVKSKMSPIEARKILGLENVETVSKEDIDKKYNELLTINDPKDGGSEYLQIKISGAKHCLHSALKEGKKI</sequence>
<protein>
    <recommendedName>
        <fullName>Mitochondrial import inner membrane translocase subunit tim16</fullName>
    </recommendedName>
    <alternativeName>
        <fullName>Presequence translocated-associated motor subunit pam16</fullName>
    </alternativeName>
</protein>
<proteinExistence type="inferred from homology"/>
<comment type="function">
    <text evidence="1">Regulates ATP-dependent protein translocation into the mitochondrial matrix.</text>
</comment>
<comment type="subunit">
    <text evidence="1">Probable component of the PAM complex at least composed of a mitochondrial HSP70 protein, grepE, tim16 and tim14. Associates with the TIM23 complex.</text>
</comment>
<comment type="subcellular location">
    <subcellularLocation>
        <location evidence="1">Mitochondrion inner membrane</location>
        <topology evidence="1">Peripheral membrane protein</topology>
        <orientation evidence="1">Matrix side</orientation>
    </subcellularLocation>
</comment>
<comment type="domain">
    <text evidence="1">The J-like region, although related to the J domain does not have co-chaperone activity.</text>
</comment>
<comment type="similarity">
    <text evidence="2">Belongs to the TIM16/PAM16 family.</text>
</comment>
<accession>Q54SV6</accession>
<gene>
    <name type="primary">timm16</name>
    <name type="synonym">pam16</name>
    <name type="synonym">tim16</name>
    <name type="ORF">DDB_G0282195</name>
</gene>
<name>TIM16_DICDI</name>
<dbReference type="EMBL" id="AAFI02000046">
    <property type="protein sequence ID" value="EAL66303.1"/>
    <property type="molecule type" value="Genomic_DNA"/>
</dbReference>
<dbReference type="RefSeq" id="XP_640279.1">
    <property type="nucleotide sequence ID" value="XM_635187.1"/>
</dbReference>
<dbReference type="SMR" id="Q54SV6"/>
<dbReference type="FunCoup" id="Q54SV6">
    <property type="interactions" value="71"/>
</dbReference>
<dbReference type="STRING" id="44689.Q54SV6"/>
<dbReference type="PaxDb" id="44689-DDB0238039"/>
<dbReference type="EnsemblProtists" id="EAL66303">
    <property type="protein sequence ID" value="EAL66303"/>
    <property type="gene ID" value="DDB_G0282195"/>
</dbReference>
<dbReference type="GeneID" id="8623453"/>
<dbReference type="KEGG" id="ddi:DDB_G0282195"/>
<dbReference type="dictyBase" id="DDB_G0282195">
    <property type="gene designation" value="timm16"/>
</dbReference>
<dbReference type="VEuPathDB" id="AmoebaDB:DDB_G0282195"/>
<dbReference type="eggNOG" id="ENOG502R0BQ">
    <property type="taxonomic scope" value="Eukaryota"/>
</dbReference>
<dbReference type="HOGENOM" id="CLU_101461_2_1_1"/>
<dbReference type="InParanoid" id="Q54SV6"/>
<dbReference type="OMA" id="MAYKQAI"/>
<dbReference type="PhylomeDB" id="Q54SV6"/>
<dbReference type="PRO" id="PR:Q54SV6"/>
<dbReference type="Proteomes" id="UP000002195">
    <property type="component" value="Chromosome 3"/>
</dbReference>
<dbReference type="GO" id="GO:0005744">
    <property type="term" value="C:TIM23 mitochondrial import inner membrane translocase complex"/>
    <property type="evidence" value="ECO:0000250"/>
    <property type="project" value="dictyBase"/>
</dbReference>
<dbReference type="GO" id="GO:0030150">
    <property type="term" value="P:protein import into mitochondrial matrix"/>
    <property type="evidence" value="ECO:0000250"/>
    <property type="project" value="dictyBase"/>
</dbReference>
<dbReference type="FunFam" id="1.10.287.110:FF:000090">
    <property type="entry name" value="Mitochondrial import inner membrane translocase subunit TIM16, putative"/>
    <property type="match status" value="1"/>
</dbReference>
<dbReference type="Gene3D" id="1.10.287.110">
    <property type="entry name" value="DnaJ domain"/>
    <property type="match status" value="1"/>
</dbReference>
<dbReference type="InterPro" id="IPR036869">
    <property type="entry name" value="J_dom_sf"/>
</dbReference>
<dbReference type="InterPro" id="IPR005341">
    <property type="entry name" value="Tim16"/>
</dbReference>
<dbReference type="PANTHER" id="PTHR12388">
    <property type="entry name" value="MITOCHONDRIA ASSOCIATED GRANULOCYTE MACROPHAGE CSF SIGNALING MOLECULE"/>
    <property type="match status" value="1"/>
</dbReference>
<dbReference type="PANTHER" id="PTHR12388:SF0">
    <property type="entry name" value="MITOCHONDRIAL IMPORT INNER MEMBRANE TRANSLOCASE SUBUNIT TIM16"/>
    <property type="match status" value="1"/>
</dbReference>
<dbReference type="Pfam" id="PF03656">
    <property type="entry name" value="Pam16"/>
    <property type="match status" value="1"/>
</dbReference>
<dbReference type="SUPFAM" id="SSF46565">
    <property type="entry name" value="Chaperone J-domain"/>
    <property type="match status" value="1"/>
</dbReference>
<keyword id="KW-0472">Membrane</keyword>
<keyword id="KW-0496">Mitochondrion</keyword>
<keyword id="KW-0999">Mitochondrion inner membrane</keyword>
<keyword id="KW-0653">Protein transport</keyword>
<keyword id="KW-1185">Reference proteome</keyword>
<keyword id="KW-0811">Translocation</keyword>
<keyword id="KW-0813">Transport</keyword>